<feature type="chain" id="PRO_0000055354" description="Protein-export protein SecB">
    <location>
        <begin position="1"/>
        <end position="163"/>
    </location>
</feature>
<reference key="1">
    <citation type="journal article" date="2002" name="Proc. Natl. Acad. Sci. U.S.A.">
        <title>The genome sequence of the facultative intracellular pathogen Brucella melitensis.</title>
        <authorList>
            <person name="DelVecchio V.G."/>
            <person name="Kapatral V."/>
            <person name="Redkar R.J."/>
            <person name="Patra G."/>
            <person name="Mujer C."/>
            <person name="Los T."/>
            <person name="Ivanova N."/>
            <person name="Anderson I."/>
            <person name="Bhattacharyya A."/>
            <person name="Lykidis A."/>
            <person name="Reznik G."/>
            <person name="Jablonski L."/>
            <person name="Larsen N."/>
            <person name="D'Souza M."/>
            <person name="Bernal A."/>
            <person name="Mazur M."/>
            <person name="Goltsman E."/>
            <person name="Selkov E."/>
            <person name="Elzer P.H."/>
            <person name="Hagius S."/>
            <person name="O'Callaghan D."/>
            <person name="Letesson J.-J."/>
            <person name="Haselkorn R."/>
            <person name="Kyrpides N.C."/>
            <person name="Overbeek R."/>
        </authorList>
    </citation>
    <scope>NUCLEOTIDE SEQUENCE [LARGE SCALE GENOMIC DNA]</scope>
    <source>
        <strain>ATCC 23456 / CCUG 17765 / NCTC 10094 / 16M</strain>
    </source>
</reference>
<gene>
    <name evidence="1" type="primary">secB</name>
    <name type="ordered locus">BMEI2055</name>
</gene>
<accession>Q8YE23</accession>
<evidence type="ECO:0000255" key="1">
    <source>
        <dbReference type="HAMAP-Rule" id="MF_00821"/>
    </source>
</evidence>
<comment type="function">
    <text evidence="1">One of the proteins required for the normal export of preproteins out of the cell cytoplasm. It is a molecular chaperone that binds to a subset of precursor proteins, maintaining them in a translocation-competent state. It also specifically binds to its receptor SecA.</text>
</comment>
<comment type="subunit">
    <text evidence="1">Homotetramer, a dimer of dimers. One homotetramer interacts with 1 SecA dimer.</text>
</comment>
<comment type="subcellular location">
    <subcellularLocation>
        <location evidence="1">Cytoplasm</location>
    </subcellularLocation>
</comment>
<comment type="similarity">
    <text evidence="1">Belongs to the SecB family.</text>
</comment>
<keyword id="KW-0143">Chaperone</keyword>
<keyword id="KW-0963">Cytoplasm</keyword>
<keyword id="KW-0653">Protein transport</keyword>
<keyword id="KW-0811">Translocation</keyword>
<keyword id="KW-0813">Transport</keyword>
<sequence length="163" mass="17878">MSDKAAGETKNGNGATTEPSLNILAQYVKDLSFESPGAPLSLRPREKAPSININVNVNANPLSETDFDVVLTLEAKAVDGKDILFNTELVYGGVFRIQGIPQEHMLPLLFIECPRLLFPFARQIIADATRNGGYPPLMIDPIDFAQMFQQRMAEEQAKSAVKS</sequence>
<organism>
    <name type="scientific">Brucella melitensis biotype 1 (strain ATCC 23456 / CCUG 17765 / NCTC 10094 / 16M)</name>
    <dbReference type="NCBI Taxonomy" id="224914"/>
    <lineage>
        <taxon>Bacteria</taxon>
        <taxon>Pseudomonadati</taxon>
        <taxon>Pseudomonadota</taxon>
        <taxon>Alphaproteobacteria</taxon>
        <taxon>Hyphomicrobiales</taxon>
        <taxon>Brucellaceae</taxon>
        <taxon>Brucella/Ochrobactrum group</taxon>
        <taxon>Brucella</taxon>
    </lineage>
</organism>
<name>SECB_BRUME</name>
<proteinExistence type="inferred from homology"/>
<protein>
    <recommendedName>
        <fullName evidence="1">Protein-export protein SecB</fullName>
    </recommendedName>
</protein>
<dbReference type="EMBL" id="AE008917">
    <property type="protein sequence ID" value="AAL53236.1"/>
    <property type="molecule type" value="Genomic_DNA"/>
</dbReference>
<dbReference type="PIR" id="AI3508">
    <property type="entry name" value="AI3508"/>
</dbReference>
<dbReference type="RefSeq" id="WP_002965136.1">
    <property type="nucleotide sequence ID" value="NZ_GG703778.1"/>
</dbReference>
<dbReference type="SMR" id="Q8YE23"/>
<dbReference type="GeneID" id="97534666"/>
<dbReference type="KEGG" id="bme:BMEI2055"/>
<dbReference type="KEGG" id="bmel:DK63_1439"/>
<dbReference type="PATRIC" id="fig|224914.52.peg.1515"/>
<dbReference type="eggNOG" id="COG1952">
    <property type="taxonomic scope" value="Bacteria"/>
</dbReference>
<dbReference type="PhylomeDB" id="Q8YE23"/>
<dbReference type="Proteomes" id="UP000000419">
    <property type="component" value="Chromosome I"/>
</dbReference>
<dbReference type="GO" id="GO:0005737">
    <property type="term" value="C:cytoplasm"/>
    <property type="evidence" value="ECO:0007669"/>
    <property type="project" value="UniProtKB-SubCell"/>
</dbReference>
<dbReference type="GO" id="GO:0051082">
    <property type="term" value="F:unfolded protein binding"/>
    <property type="evidence" value="ECO:0007669"/>
    <property type="project" value="InterPro"/>
</dbReference>
<dbReference type="GO" id="GO:0006457">
    <property type="term" value="P:protein folding"/>
    <property type="evidence" value="ECO:0007669"/>
    <property type="project" value="UniProtKB-UniRule"/>
</dbReference>
<dbReference type="GO" id="GO:0051262">
    <property type="term" value="P:protein tetramerization"/>
    <property type="evidence" value="ECO:0007669"/>
    <property type="project" value="InterPro"/>
</dbReference>
<dbReference type="GO" id="GO:0015031">
    <property type="term" value="P:protein transport"/>
    <property type="evidence" value="ECO:0007669"/>
    <property type="project" value="UniProtKB-UniRule"/>
</dbReference>
<dbReference type="Gene3D" id="3.10.420.10">
    <property type="entry name" value="SecB-like"/>
    <property type="match status" value="1"/>
</dbReference>
<dbReference type="HAMAP" id="MF_00821">
    <property type="entry name" value="SecB"/>
    <property type="match status" value="1"/>
</dbReference>
<dbReference type="InterPro" id="IPR003708">
    <property type="entry name" value="SecB"/>
</dbReference>
<dbReference type="InterPro" id="IPR035958">
    <property type="entry name" value="SecB-like_sf"/>
</dbReference>
<dbReference type="NCBIfam" id="NF004392">
    <property type="entry name" value="PRK05751.1-3"/>
    <property type="match status" value="1"/>
</dbReference>
<dbReference type="NCBIfam" id="TIGR00809">
    <property type="entry name" value="secB"/>
    <property type="match status" value="1"/>
</dbReference>
<dbReference type="PANTHER" id="PTHR36918">
    <property type="match status" value="1"/>
</dbReference>
<dbReference type="PANTHER" id="PTHR36918:SF1">
    <property type="entry name" value="PROTEIN-EXPORT PROTEIN SECB"/>
    <property type="match status" value="1"/>
</dbReference>
<dbReference type="Pfam" id="PF02556">
    <property type="entry name" value="SecB"/>
    <property type="match status" value="1"/>
</dbReference>
<dbReference type="PRINTS" id="PR01594">
    <property type="entry name" value="SECBCHAPRONE"/>
</dbReference>
<dbReference type="SUPFAM" id="SSF54611">
    <property type="entry name" value="SecB-like"/>
    <property type="match status" value="1"/>
</dbReference>